<keyword id="KW-0067">ATP-binding</keyword>
<keyword id="KW-0963">Cytoplasm</keyword>
<keyword id="KW-0227">DNA damage</keyword>
<keyword id="KW-0234">DNA repair</keyword>
<keyword id="KW-0235">DNA replication</keyword>
<keyword id="KW-0238">DNA-binding</keyword>
<keyword id="KW-0547">Nucleotide-binding</keyword>
<keyword id="KW-1185">Reference proteome</keyword>
<keyword id="KW-0742">SOS response</keyword>
<organism>
    <name type="scientific">Chloroherpeton thalassium (strain ATCC 35110 / GB-78)</name>
    <dbReference type="NCBI Taxonomy" id="517418"/>
    <lineage>
        <taxon>Bacteria</taxon>
        <taxon>Pseudomonadati</taxon>
        <taxon>Chlorobiota</taxon>
        <taxon>Chlorobiia</taxon>
        <taxon>Chlorobiales</taxon>
        <taxon>Chloroherpetonaceae</taxon>
        <taxon>Chloroherpeton</taxon>
    </lineage>
</organism>
<sequence>MKLFKLSIHGFRSHQDAVFLPHDGINLIYGKNGTGKTNLLEAIHYTCLTKSFLSTSDSDALHFQAGHFELEAVLQSDSENESKVRVYYSPAEGKHVFINKTPLESFSKIVGEFPCVALSPYDIALTQGSPQERRRFLDASISQTNKAYLADLLSYRRVLAQRNKLLADMKHRTFSSPELDVWTASLSALAASIIFRRIHFVRDFAQYLENAYADFQSIDETPGLTYKTELSLNENSFSEAELAKQISEKFEEMKFDELRRGLTLFGPHRDDLAFSINNLSLRKYASQGQHKTFVICLKLAQYFYICELLSEKPIFLLDDVFSELDSQRAEELVRILSSKRSGQSFITTTERKDFAEVKQHTIGGIISG</sequence>
<accession>B3QWU7</accession>
<gene>
    <name evidence="1" type="primary">recF</name>
    <name type="ordered locus">Ctha_0843</name>
</gene>
<protein>
    <recommendedName>
        <fullName evidence="1">DNA replication and repair protein RecF</fullName>
    </recommendedName>
</protein>
<feature type="chain" id="PRO_1000121095" description="DNA replication and repair protein RecF">
    <location>
        <begin position="1"/>
        <end position="368"/>
    </location>
</feature>
<feature type="binding site" evidence="1">
    <location>
        <begin position="30"/>
        <end position="37"/>
    </location>
    <ligand>
        <name>ATP</name>
        <dbReference type="ChEBI" id="CHEBI:30616"/>
    </ligand>
</feature>
<comment type="function">
    <text evidence="1">The RecF protein is involved in DNA metabolism; it is required for DNA replication and normal SOS inducibility. RecF binds preferentially to single-stranded, linear DNA. It also seems to bind ATP.</text>
</comment>
<comment type="subcellular location">
    <subcellularLocation>
        <location evidence="1">Cytoplasm</location>
    </subcellularLocation>
</comment>
<comment type="similarity">
    <text evidence="1">Belongs to the RecF family.</text>
</comment>
<name>RECF_CHLT3</name>
<evidence type="ECO:0000255" key="1">
    <source>
        <dbReference type="HAMAP-Rule" id="MF_00365"/>
    </source>
</evidence>
<reference key="1">
    <citation type="submission" date="2008-06" db="EMBL/GenBank/DDBJ databases">
        <title>Complete sequence of Chloroherpeton thalassium ATCC 35110.</title>
        <authorList>
            <consortium name="US DOE Joint Genome Institute"/>
            <person name="Lucas S."/>
            <person name="Copeland A."/>
            <person name="Lapidus A."/>
            <person name="Glavina del Rio T."/>
            <person name="Dalin E."/>
            <person name="Tice H."/>
            <person name="Bruce D."/>
            <person name="Goodwin L."/>
            <person name="Pitluck S."/>
            <person name="Schmutz J."/>
            <person name="Larimer F."/>
            <person name="Land M."/>
            <person name="Hauser L."/>
            <person name="Kyrpides N."/>
            <person name="Mikhailova N."/>
            <person name="Liu Z."/>
            <person name="Li T."/>
            <person name="Zhao F."/>
            <person name="Overmann J."/>
            <person name="Bryant D.A."/>
            <person name="Richardson P."/>
        </authorList>
    </citation>
    <scope>NUCLEOTIDE SEQUENCE [LARGE SCALE GENOMIC DNA]</scope>
    <source>
        <strain>ATCC 35110 / GB-78</strain>
    </source>
</reference>
<proteinExistence type="inferred from homology"/>
<dbReference type="EMBL" id="CP001100">
    <property type="protein sequence ID" value="ACF13311.1"/>
    <property type="molecule type" value="Genomic_DNA"/>
</dbReference>
<dbReference type="RefSeq" id="WP_012499395.1">
    <property type="nucleotide sequence ID" value="NC_011026.1"/>
</dbReference>
<dbReference type="SMR" id="B3QWU7"/>
<dbReference type="STRING" id="517418.Ctha_0843"/>
<dbReference type="KEGG" id="cts:Ctha_0843"/>
<dbReference type="eggNOG" id="COG1195">
    <property type="taxonomic scope" value="Bacteria"/>
</dbReference>
<dbReference type="HOGENOM" id="CLU_040267_0_1_10"/>
<dbReference type="OrthoDB" id="9803889at2"/>
<dbReference type="Proteomes" id="UP000001208">
    <property type="component" value="Chromosome"/>
</dbReference>
<dbReference type="GO" id="GO:0005737">
    <property type="term" value="C:cytoplasm"/>
    <property type="evidence" value="ECO:0007669"/>
    <property type="project" value="UniProtKB-SubCell"/>
</dbReference>
<dbReference type="GO" id="GO:0005524">
    <property type="term" value="F:ATP binding"/>
    <property type="evidence" value="ECO:0007669"/>
    <property type="project" value="UniProtKB-UniRule"/>
</dbReference>
<dbReference type="GO" id="GO:0003697">
    <property type="term" value="F:single-stranded DNA binding"/>
    <property type="evidence" value="ECO:0007669"/>
    <property type="project" value="UniProtKB-UniRule"/>
</dbReference>
<dbReference type="GO" id="GO:0006260">
    <property type="term" value="P:DNA replication"/>
    <property type="evidence" value="ECO:0007669"/>
    <property type="project" value="UniProtKB-UniRule"/>
</dbReference>
<dbReference type="GO" id="GO:0000731">
    <property type="term" value="P:DNA synthesis involved in DNA repair"/>
    <property type="evidence" value="ECO:0007669"/>
    <property type="project" value="TreeGrafter"/>
</dbReference>
<dbReference type="GO" id="GO:0006302">
    <property type="term" value="P:double-strand break repair"/>
    <property type="evidence" value="ECO:0007669"/>
    <property type="project" value="TreeGrafter"/>
</dbReference>
<dbReference type="GO" id="GO:0009432">
    <property type="term" value="P:SOS response"/>
    <property type="evidence" value="ECO:0007669"/>
    <property type="project" value="UniProtKB-UniRule"/>
</dbReference>
<dbReference type="Gene3D" id="3.40.50.300">
    <property type="entry name" value="P-loop containing nucleotide triphosphate hydrolases"/>
    <property type="match status" value="1"/>
</dbReference>
<dbReference type="Gene3D" id="1.20.1050.90">
    <property type="entry name" value="RecF/RecN/SMC, N-terminal domain"/>
    <property type="match status" value="1"/>
</dbReference>
<dbReference type="HAMAP" id="MF_00365">
    <property type="entry name" value="RecF"/>
    <property type="match status" value="1"/>
</dbReference>
<dbReference type="InterPro" id="IPR001238">
    <property type="entry name" value="DNA-binding_RecF"/>
</dbReference>
<dbReference type="InterPro" id="IPR018078">
    <property type="entry name" value="DNA-binding_RecF_CS"/>
</dbReference>
<dbReference type="InterPro" id="IPR027417">
    <property type="entry name" value="P-loop_NTPase"/>
</dbReference>
<dbReference type="InterPro" id="IPR003395">
    <property type="entry name" value="RecF/RecN/SMC_N"/>
</dbReference>
<dbReference type="InterPro" id="IPR042174">
    <property type="entry name" value="RecF_2"/>
</dbReference>
<dbReference type="NCBIfam" id="TIGR00611">
    <property type="entry name" value="recf"/>
    <property type="match status" value="1"/>
</dbReference>
<dbReference type="PANTHER" id="PTHR32182">
    <property type="entry name" value="DNA REPLICATION AND REPAIR PROTEIN RECF"/>
    <property type="match status" value="1"/>
</dbReference>
<dbReference type="PANTHER" id="PTHR32182:SF0">
    <property type="entry name" value="DNA REPLICATION AND REPAIR PROTEIN RECF"/>
    <property type="match status" value="1"/>
</dbReference>
<dbReference type="Pfam" id="PF02463">
    <property type="entry name" value="SMC_N"/>
    <property type="match status" value="1"/>
</dbReference>
<dbReference type="SUPFAM" id="SSF52540">
    <property type="entry name" value="P-loop containing nucleoside triphosphate hydrolases"/>
    <property type="match status" value="1"/>
</dbReference>
<dbReference type="PROSITE" id="PS00618">
    <property type="entry name" value="RECF_2"/>
    <property type="match status" value="1"/>
</dbReference>